<proteinExistence type="inferred from homology"/>
<dbReference type="EMBL" id="CP000108">
    <property type="protein sequence ID" value="ABB29087.1"/>
    <property type="molecule type" value="Genomic_DNA"/>
</dbReference>
<dbReference type="SMR" id="Q3API8"/>
<dbReference type="STRING" id="340177.Cag_1836"/>
<dbReference type="KEGG" id="cch:Cag_1836"/>
<dbReference type="eggNOG" id="COG0097">
    <property type="taxonomic scope" value="Bacteria"/>
</dbReference>
<dbReference type="HOGENOM" id="CLU_065464_1_2_10"/>
<dbReference type="OrthoDB" id="9805007at2"/>
<dbReference type="GO" id="GO:0022625">
    <property type="term" value="C:cytosolic large ribosomal subunit"/>
    <property type="evidence" value="ECO:0007669"/>
    <property type="project" value="TreeGrafter"/>
</dbReference>
<dbReference type="GO" id="GO:0019843">
    <property type="term" value="F:rRNA binding"/>
    <property type="evidence" value="ECO:0007669"/>
    <property type="project" value="UniProtKB-UniRule"/>
</dbReference>
<dbReference type="GO" id="GO:0003735">
    <property type="term" value="F:structural constituent of ribosome"/>
    <property type="evidence" value="ECO:0007669"/>
    <property type="project" value="InterPro"/>
</dbReference>
<dbReference type="GO" id="GO:0002181">
    <property type="term" value="P:cytoplasmic translation"/>
    <property type="evidence" value="ECO:0007669"/>
    <property type="project" value="TreeGrafter"/>
</dbReference>
<dbReference type="FunFam" id="3.90.930.12:FF:000001">
    <property type="entry name" value="50S ribosomal protein L6"/>
    <property type="match status" value="1"/>
</dbReference>
<dbReference type="FunFam" id="3.90.930.12:FF:000002">
    <property type="entry name" value="50S ribosomal protein L6"/>
    <property type="match status" value="1"/>
</dbReference>
<dbReference type="Gene3D" id="3.90.930.12">
    <property type="entry name" value="Ribosomal protein L6, alpha-beta domain"/>
    <property type="match status" value="2"/>
</dbReference>
<dbReference type="HAMAP" id="MF_01365_B">
    <property type="entry name" value="Ribosomal_uL6_B"/>
    <property type="match status" value="1"/>
</dbReference>
<dbReference type="InterPro" id="IPR000702">
    <property type="entry name" value="Ribosomal_uL6-like"/>
</dbReference>
<dbReference type="InterPro" id="IPR036789">
    <property type="entry name" value="Ribosomal_uL6-like_a/b-dom_sf"/>
</dbReference>
<dbReference type="InterPro" id="IPR020040">
    <property type="entry name" value="Ribosomal_uL6_a/b-dom"/>
</dbReference>
<dbReference type="InterPro" id="IPR019906">
    <property type="entry name" value="Ribosomal_uL6_bac-type"/>
</dbReference>
<dbReference type="NCBIfam" id="TIGR03654">
    <property type="entry name" value="L6_bact"/>
    <property type="match status" value="1"/>
</dbReference>
<dbReference type="PANTHER" id="PTHR11655">
    <property type="entry name" value="60S/50S RIBOSOMAL PROTEIN L6/L9"/>
    <property type="match status" value="1"/>
</dbReference>
<dbReference type="PANTHER" id="PTHR11655:SF14">
    <property type="entry name" value="LARGE RIBOSOMAL SUBUNIT PROTEIN UL6M"/>
    <property type="match status" value="1"/>
</dbReference>
<dbReference type="Pfam" id="PF00347">
    <property type="entry name" value="Ribosomal_L6"/>
    <property type="match status" value="2"/>
</dbReference>
<dbReference type="PIRSF" id="PIRSF002162">
    <property type="entry name" value="Ribosomal_L6"/>
    <property type="match status" value="1"/>
</dbReference>
<dbReference type="PRINTS" id="PR00059">
    <property type="entry name" value="RIBOSOMALL6"/>
</dbReference>
<dbReference type="SUPFAM" id="SSF56053">
    <property type="entry name" value="Ribosomal protein L6"/>
    <property type="match status" value="2"/>
</dbReference>
<feature type="chain" id="PRO_0000265243" description="Large ribosomal subunit protein uL6">
    <location>
        <begin position="1"/>
        <end position="179"/>
    </location>
</feature>
<organism>
    <name type="scientific">Chlorobium chlorochromatii (strain CaD3)</name>
    <dbReference type="NCBI Taxonomy" id="340177"/>
    <lineage>
        <taxon>Bacteria</taxon>
        <taxon>Pseudomonadati</taxon>
        <taxon>Chlorobiota</taxon>
        <taxon>Chlorobiia</taxon>
        <taxon>Chlorobiales</taxon>
        <taxon>Chlorobiaceae</taxon>
        <taxon>Chlorobium/Pelodictyon group</taxon>
        <taxon>Chlorobium</taxon>
    </lineage>
</organism>
<name>RL6_CHLCH</name>
<comment type="function">
    <text evidence="1">This protein binds to the 23S rRNA, and is important in its secondary structure. It is located near the subunit interface in the base of the L7/L12 stalk, and near the tRNA binding site of the peptidyltransferase center.</text>
</comment>
<comment type="subunit">
    <text evidence="1">Part of the 50S ribosomal subunit.</text>
</comment>
<comment type="similarity">
    <text evidence="1">Belongs to the universal ribosomal protein uL6 family.</text>
</comment>
<gene>
    <name evidence="1" type="primary">rplF</name>
    <name type="ordered locus">Cag_1836</name>
</gene>
<accession>Q3API8</accession>
<protein>
    <recommendedName>
        <fullName evidence="1">Large ribosomal subunit protein uL6</fullName>
    </recommendedName>
    <alternativeName>
        <fullName evidence="2">50S ribosomal protein L6</fullName>
    </alternativeName>
</protein>
<keyword id="KW-0687">Ribonucleoprotein</keyword>
<keyword id="KW-0689">Ribosomal protein</keyword>
<keyword id="KW-0694">RNA-binding</keyword>
<keyword id="KW-0699">rRNA-binding</keyword>
<sequence>MSRIGKMPIPLSNQAKIEINDSIIRVSGPKGSLEQKLTDQVIITEENSALLVRRIDDSKKARAQHGLYRMLINNMVQGVTNGFTTKLEIAGVGFRAEMKGELLALTLGFSHLIYFKAPEGIKLETPDQVTVLISGIDKALVGQVAAKIRSFKKPEPYRGKGIKYSGEVIRRKEGKAAGK</sequence>
<evidence type="ECO:0000255" key="1">
    <source>
        <dbReference type="HAMAP-Rule" id="MF_01365"/>
    </source>
</evidence>
<evidence type="ECO:0000305" key="2"/>
<reference key="1">
    <citation type="submission" date="2005-08" db="EMBL/GenBank/DDBJ databases">
        <title>Complete sequence of Chlorobium chlorochromatii CaD3.</title>
        <authorList>
            <consortium name="US DOE Joint Genome Institute"/>
            <person name="Copeland A."/>
            <person name="Lucas S."/>
            <person name="Lapidus A."/>
            <person name="Barry K."/>
            <person name="Detter J.C."/>
            <person name="Glavina T."/>
            <person name="Hammon N."/>
            <person name="Israni S."/>
            <person name="Pitluck S."/>
            <person name="Bryant D."/>
            <person name="Schmutz J."/>
            <person name="Larimer F."/>
            <person name="Land M."/>
            <person name="Kyrpides N."/>
            <person name="Ivanova N."/>
            <person name="Richardson P."/>
        </authorList>
    </citation>
    <scope>NUCLEOTIDE SEQUENCE [LARGE SCALE GENOMIC DNA]</scope>
    <source>
        <strain>CaD3</strain>
    </source>
</reference>